<protein>
    <recommendedName>
        <fullName>BEN domain-containing protein 6</fullName>
    </recommendedName>
</protein>
<sequence>MQKILQTDDITDNQVLRKRKRKRTETANSENANSALEKAQRDPYSGNAFLPGESSSDEETPLMELSKEELCNKIESLKEKLRSIRKENSRLRQSLVMLQVLPQAVTQFEELVGMAETLLKSGGAVSTPASTLWRATNNSSPDSFASLCSNSNSTSSSPSSVKAEEEQHPGEKQFTIERWQIARCNKSKPQKFINDLMQVLYTNEYMATHSLTGAKSSTSRDKVVKPAMNQNEVQEIIGVTKQVFPSADDVSIRRMIGQKLNNCTKKPNASKAPNSQDGILK</sequence>
<reference key="1">
    <citation type="journal article" date="2005" name="Science">
        <title>The transcriptional landscape of the mammalian genome.</title>
        <authorList>
            <person name="Carninci P."/>
            <person name="Kasukawa T."/>
            <person name="Katayama S."/>
            <person name="Gough J."/>
            <person name="Frith M.C."/>
            <person name="Maeda N."/>
            <person name="Oyama R."/>
            <person name="Ravasi T."/>
            <person name="Lenhard B."/>
            <person name="Wells C."/>
            <person name="Kodzius R."/>
            <person name="Shimokawa K."/>
            <person name="Bajic V.B."/>
            <person name="Brenner S.E."/>
            <person name="Batalov S."/>
            <person name="Forrest A.R."/>
            <person name="Zavolan M."/>
            <person name="Davis M.J."/>
            <person name="Wilming L.G."/>
            <person name="Aidinis V."/>
            <person name="Allen J.E."/>
            <person name="Ambesi-Impiombato A."/>
            <person name="Apweiler R."/>
            <person name="Aturaliya R.N."/>
            <person name="Bailey T.L."/>
            <person name="Bansal M."/>
            <person name="Baxter L."/>
            <person name="Beisel K.W."/>
            <person name="Bersano T."/>
            <person name="Bono H."/>
            <person name="Chalk A.M."/>
            <person name="Chiu K.P."/>
            <person name="Choudhary V."/>
            <person name="Christoffels A."/>
            <person name="Clutterbuck D.R."/>
            <person name="Crowe M.L."/>
            <person name="Dalla E."/>
            <person name="Dalrymple B.P."/>
            <person name="de Bono B."/>
            <person name="Della Gatta G."/>
            <person name="di Bernardo D."/>
            <person name="Down T."/>
            <person name="Engstrom P."/>
            <person name="Fagiolini M."/>
            <person name="Faulkner G."/>
            <person name="Fletcher C.F."/>
            <person name="Fukushima T."/>
            <person name="Furuno M."/>
            <person name="Futaki S."/>
            <person name="Gariboldi M."/>
            <person name="Georgii-Hemming P."/>
            <person name="Gingeras T.R."/>
            <person name="Gojobori T."/>
            <person name="Green R.E."/>
            <person name="Gustincich S."/>
            <person name="Harbers M."/>
            <person name="Hayashi Y."/>
            <person name="Hensch T.K."/>
            <person name="Hirokawa N."/>
            <person name="Hill D."/>
            <person name="Huminiecki L."/>
            <person name="Iacono M."/>
            <person name="Ikeo K."/>
            <person name="Iwama A."/>
            <person name="Ishikawa T."/>
            <person name="Jakt M."/>
            <person name="Kanapin A."/>
            <person name="Katoh M."/>
            <person name="Kawasawa Y."/>
            <person name="Kelso J."/>
            <person name="Kitamura H."/>
            <person name="Kitano H."/>
            <person name="Kollias G."/>
            <person name="Krishnan S.P."/>
            <person name="Kruger A."/>
            <person name="Kummerfeld S.K."/>
            <person name="Kurochkin I.V."/>
            <person name="Lareau L.F."/>
            <person name="Lazarevic D."/>
            <person name="Lipovich L."/>
            <person name="Liu J."/>
            <person name="Liuni S."/>
            <person name="McWilliam S."/>
            <person name="Madan Babu M."/>
            <person name="Madera M."/>
            <person name="Marchionni L."/>
            <person name="Matsuda H."/>
            <person name="Matsuzawa S."/>
            <person name="Miki H."/>
            <person name="Mignone F."/>
            <person name="Miyake S."/>
            <person name="Morris K."/>
            <person name="Mottagui-Tabar S."/>
            <person name="Mulder N."/>
            <person name="Nakano N."/>
            <person name="Nakauchi H."/>
            <person name="Ng P."/>
            <person name="Nilsson R."/>
            <person name="Nishiguchi S."/>
            <person name="Nishikawa S."/>
            <person name="Nori F."/>
            <person name="Ohara O."/>
            <person name="Okazaki Y."/>
            <person name="Orlando V."/>
            <person name="Pang K.C."/>
            <person name="Pavan W.J."/>
            <person name="Pavesi G."/>
            <person name="Pesole G."/>
            <person name="Petrovsky N."/>
            <person name="Piazza S."/>
            <person name="Reed J."/>
            <person name="Reid J.F."/>
            <person name="Ring B.Z."/>
            <person name="Ringwald M."/>
            <person name="Rost B."/>
            <person name="Ruan Y."/>
            <person name="Salzberg S.L."/>
            <person name="Sandelin A."/>
            <person name="Schneider C."/>
            <person name="Schoenbach C."/>
            <person name="Sekiguchi K."/>
            <person name="Semple C.A."/>
            <person name="Seno S."/>
            <person name="Sessa L."/>
            <person name="Sheng Y."/>
            <person name="Shibata Y."/>
            <person name="Shimada H."/>
            <person name="Shimada K."/>
            <person name="Silva D."/>
            <person name="Sinclair B."/>
            <person name="Sperling S."/>
            <person name="Stupka E."/>
            <person name="Sugiura K."/>
            <person name="Sultana R."/>
            <person name="Takenaka Y."/>
            <person name="Taki K."/>
            <person name="Tammoja K."/>
            <person name="Tan S.L."/>
            <person name="Tang S."/>
            <person name="Taylor M.S."/>
            <person name="Tegner J."/>
            <person name="Teichmann S.A."/>
            <person name="Ueda H.R."/>
            <person name="van Nimwegen E."/>
            <person name="Verardo R."/>
            <person name="Wei C.L."/>
            <person name="Yagi K."/>
            <person name="Yamanishi H."/>
            <person name="Zabarovsky E."/>
            <person name="Zhu S."/>
            <person name="Zimmer A."/>
            <person name="Hide W."/>
            <person name="Bult C."/>
            <person name="Grimmond S.M."/>
            <person name="Teasdale R.D."/>
            <person name="Liu E.T."/>
            <person name="Brusic V."/>
            <person name="Quackenbush J."/>
            <person name="Wahlestedt C."/>
            <person name="Mattick J.S."/>
            <person name="Hume D.A."/>
            <person name="Kai C."/>
            <person name="Sasaki D."/>
            <person name="Tomaru Y."/>
            <person name="Fukuda S."/>
            <person name="Kanamori-Katayama M."/>
            <person name="Suzuki M."/>
            <person name="Aoki J."/>
            <person name="Arakawa T."/>
            <person name="Iida J."/>
            <person name="Imamura K."/>
            <person name="Itoh M."/>
            <person name="Kato T."/>
            <person name="Kawaji H."/>
            <person name="Kawagashira N."/>
            <person name="Kawashima T."/>
            <person name="Kojima M."/>
            <person name="Kondo S."/>
            <person name="Konno H."/>
            <person name="Nakano K."/>
            <person name="Ninomiya N."/>
            <person name="Nishio T."/>
            <person name="Okada M."/>
            <person name="Plessy C."/>
            <person name="Shibata K."/>
            <person name="Shiraki T."/>
            <person name="Suzuki S."/>
            <person name="Tagami M."/>
            <person name="Waki K."/>
            <person name="Watahiki A."/>
            <person name="Okamura-Oho Y."/>
            <person name="Suzuki H."/>
            <person name="Kawai J."/>
            <person name="Hayashizaki Y."/>
        </authorList>
    </citation>
    <scope>NUCLEOTIDE SEQUENCE [LARGE SCALE MRNA] (ISOFORMS 2 AND 3)</scope>
    <source>
        <strain>C57BL/6J</strain>
        <tissue>Corpora quadrigemina</tissue>
        <tissue>Retina</tissue>
    </source>
</reference>
<reference key="2">
    <citation type="journal article" date="2004" name="Genome Res.">
        <title>The status, quality, and expansion of the NIH full-length cDNA project: the Mammalian Gene Collection (MGC).</title>
        <authorList>
            <consortium name="The MGC Project Team"/>
        </authorList>
    </citation>
    <scope>NUCLEOTIDE SEQUENCE [LARGE SCALE MRNA] (ISOFORM 1)</scope>
    <source>
        <strain>C57BL/6J</strain>
        <tissue>Brain</tissue>
    </source>
</reference>
<reference key="3">
    <citation type="journal article" date="2013" name="Development">
        <title>BEND6 is a nuclear antagonist of Notch signaling during self-renewal of neural stem cells.</title>
        <authorList>
            <person name="Dai Q."/>
            <person name="Andreu-Agullo C."/>
            <person name="Insolera R."/>
            <person name="Wong L.C."/>
            <person name="Shi S.H."/>
            <person name="Lai E.C."/>
        </authorList>
    </citation>
    <scope>FUNCTION</scope>
    <scope>SUBCELLULAR LOCATION</scope>
    <scope>DEVELOPMENTAL STAGE</scope>
</reference>
<reference key="4">
    <citation type="journal article" date="2015" name="Genes Dev.">
        <title>Common and distinct DNA-binding and regulatory activities of the BEN-solo transcription factor family.</title>
        <authorList>
            <person name="Dai Q."/>
            <person name="Ren A."/>
            <person name="Westholm J.O."/>
            <person name="Duan H."/>
            <person name="Patel D.J."/>
            <person name="Lai E.C."/>
        </authorList>
    </citation>
    <scope>FUNCTION</scope>
</reference>
<gene>
    <name type="primary">Bend6</name>
</gene>
<evidence type="ECO:0000250" key="1">
    <source>
        <dbReference type="UniProtKB" id="Q5SZJ8"/>
    </source>
</evidence>
<evidence type="ECO:0000255" key="2"/>
<evidence type="ECO:0000255" key="3">
    <source>
        <dbReference type="PROSITE-ProRule" id="PRU00784"/>
    </source>
</evidence>
<evidence type="ECO:0000256" key="4">
    <source>
        <dbReference type="SAM" id="MobiDB-lite"/>
    </source>
</evidence>
<evidence type="ECO:0000269" key="5">
    <source>
    </source>
</evidence>
<evidence type="ECO:0000269" key="6">
    <source>
    </source>
</evidence>
<evidence type="ECO:0000303" key="7">
    <source>
    </source>
</evidence>
<comment type="function">
    <text evidence="5 6">Acts as a corepressor of recombining binding protein suppressor hairless (RBPJ) and inhibits Notch signaling in neural stem cells, thereby opposing their self-renewal and promoting neurogenesis (PubMed:23571214, PubMed:25561495).</text>
</comment>
<comment type="subunit">
    <text evidence="1">Interacts (via BEN domain) with RBPJ.</text>
</comment>
<comment type="subcellular location">
    <subcellularLocation>
        <location evidence="5">Nucleus</location>
    </subcellularLocation>
</comment>
<comment type="alternative products">
    <event type="alternative splicing"/>
    <isoform>
        <id>Q6PFX2-1</id>
        <name>1</name>
        <sequence type="displayed"/>
    </isoform>
    <isoform>
        <id>Q6PFX2-2</id>
        <name>2</name>
        <sequence type="described" ref="VSP_026968 VSP_026969"/>
    </isoform>
    <isoform>
        <id>Q6PFX2-3</id>
        <name>3</name>
        <sequence type="described" ref="VSP_026967"/>
    </isoform>
</comment>
<comment type="developmental stage">
    <text evidence="5">Expressed in differentiating neurons in embryonic neocortex (at protein level).</text>
</comment>
<accession>Q6PFX2</accession>
<accession>Q8BLC9</accession>
<accession>Q8BXN2</accession>
<organism>
    <name type="scientific">Mus musculus</name>
    <name type="common">Mouse</name>
    <dbReference type="NCBI Taxonomy" id="10090"/>
    <lineage>
        <taxon>Eukaryota</taxon>
        <taxon>Metazoa</taxon>
        <taxon>Chordata</taxon>
        <taxon>Craniata</taxon>
        <taxon>Vertebrata</taxon>
        <taxon>Euteleostomi</taxon>
        <taxon>Mammalia</taxon>
        <taxon>Eutheria</taxon>
        <taxon>Euarchontoglires</taxon>
        <taxon>Glires</taxon>
        <taxon>Rodentia</taxon>
        <taxon>Myomorpha</taxon>
        <taxon>Muroidea</taxon>
        <taxon>Muridae</taxon>
        <taxon>Murinae</taxon>
        <taxon>Mus</taxon>
        <taxon>Mus</taxon>
    </lineage>
</organism>
<dbReference type="EMBL" id="AK044633">
    <property type="protein sequence ID" value="BAC32011.1"/>
    <property type="molecule type" value="mRNA"/>
</dbReference>
<dbReference type="EMBL" id="AK045534">
    <property type="protein sequence ID" value="BAC32409.1"/>
    <property type="molecule type" value="mRNA"/>
</dbReference>
<dbReference type="EMBL" id="BC057378">
    <property type="protein sequence ID" value="AAH57378.1"/>
    <property type="molecule type" value="mRNA"/>
</dbReference>
<dbReference type="CCDS" id="CCDS35533.1">
    <molecule id="Q6PFX2-1"/>
</dbReference>
<dbReference type="CCDS" id="CCDS78557.1">
    <molecule id="Q6PFX2-3"/>
</dbReference>
<dbReference type="RefSeq" id="NP_001297413.1">
    <molecule id="Q6PFX2-3"/>
    <property type="nucleotide sequence ID" value="NM_001310484.1"/>
</dbReference>
<dbReference type="RefSeq" id="NP_796209.2">
    <molecule id="Q6PFX2-1"/>
    <property type="nucleotide sequence ID" value="NM_177235.3"/>
</dbReference>
<dbReference type="SMR" id="Q6PFX2"/>
<dbReference type="BioGRID" id="236229">
    <property type="interactions" value="1"/>
</dbReference>
<dbReference type="FunCoup" id="Q6PFX2">
    <property type="interactions" value="1195"/>
</dbReference>
<dbReference type="STRING" id="10090.ENSMUSP00000052919"/>
<dbReference type="GlyGen" id="Q6PFX2">
    <property type="glycosylation" value="1 site, 1 N-linked glycan (1 site)"/>
</dbReference>
<dbReference type="iPTMnet" id="Q6PFX2"/>
<dbReference type="PhosphoSitePlus" id="Q6PFX2"/>
<dbReference type="PaxDb" id="10090-ENSMUSP00000052919"/>
<dbReference type="ProteomicsDB" id="273483">
    <molecule id="Q6PFX2-1"/>
</dbReference>
<dbReference type="ProteomicsDB" id="273484">
    <molecule id="Q6PFX2-2"/>
</dbReference>
<dbReference type="ProteomicsDB" id="273485">
    <molecule id="Q6PFX2-3"/>
</dbReference>
<dbReference type="Antibodypedia" id="31120">
    <property type="antibodies" value="78 antibodies from 17 providers"/>
</dbReference>
<dbReference type="DNASU" id="320705"/>
<dbReference type="Ensembl" id="ENSMUST00000062289.11">
    <molecule id="Q6PFX2-1"/>
    <property type="protein sequence ID" value="ENSMUSP00000052919.9"/>
    <property type="gene ID" value="ENSMUSG00000042182.17"/>
</dbReference>
<dbReference type="Ensembl" id="ENSMUST00000115161.8">
    <molecule id="Q6PFX2-3"/>
    <property type="protein sequence ID" value="ENSMUSP00000110814.2"/>
    <property type="gene ID" value="ENSMUSG00000042182.17"/>
</dbReference>
<dbReference type="GeneID" id="320705"/>
<dbReference type="KEGG" id="mmu:320705"/>
<dbReference type="UCSC" id="uc007aoc.1">
    <molecule id="Q6PFX2-1"/>
    <property type="organism name" value="mouse"/>
</dbReference>
<dbReference type="UCSC" id="uc007aoe.1">
    <molecule id="Q6PFX2-2"/>
    <property type="organism name" value="mouse"/>
</dbReference>
<dbReference type="AGR" id="MGI:2444572"/>
<dbReference type="CTD" id="221336"/>
<dbReference type="MGI" id="MGI:2444572">
    <property type="gene designation" value="Bend6"/>
</dbReference>
<dbReference type="VEuPathDB" id="HostDB:ENSMUSG00000042182"/>
<dbReference type="eggNOG" id="ENOG502SDDU">
    <property type="taxonomic scope" value="Eukaryota"/>
</dbReference>
<dbReference type="GeneTree" id="ENSGT00390000016954"/>
<dbReference type="HOGENOM" id="CLU_1506790_0_0_1"/>
<dbReference type="InParanoid" id="Q6PFX2"/>
<dbReference type="OMA" id="WRAANNS"/>
<dbReference type="OrthoDB" id="8858716at2759"/>
<dbReference type="PhylomeDB" id="Q6PFX2"/>
<dbReference type="TreeFam" id="TF335394"/>
<dbReference type="BioGRID-ORCS" id="320705">
    <property type="hits" value="3 hits in 77 CRISPR screens"/>
</dbReference>
<dbReference type="PRO" id="PR:Q6PFX2"/>
<dbReference type="Proteomes" id="UP000000589">
    <property type="component" value="Chromosome 1"/>
</dbReference>
<dbReference type="RNAct" id="Q6PFX2">
    <property type="molecule type" value="protein"/>
</dbReference>
<dbReference type="Bgee" id="ENSMUSG00000042182">
    <property type="expression patterns" value="Expressed in pontine nuclear group and 142 other cell types or tissues"/>
</dbReference>
<dbReference type="ExpressionAtlas" id="Q6PFX2">
    <property type="expression patterns" value="baseline and differential"/>
</dbReference>
<dbReference type="GO" id="GO:0005634">
    <property type="term" value="C:nucleus"/>
    <property type="evidence" value="ECO:0000314"/>
    <property type="project" value="MGI"/>
</dbReference>
<dbReference type="GO" id="GO:0003682">
    <property type="term" value="F:chromatin binding"/>
    <property type="evidence" value="ECO:0000314"/>
    <property type="project" value="MGI"/>
</dbReference>
<dbReference type="GO" id="GO:0003677">
    <property type="term" value="F:DNA binding"/>
    <property type="evidence" value="ECO:0007669"/>
    <property type="project" value="InterPro"/>
</dbReference>
<dbReference type="GO" id="GO:0003714">
    <property type="term" value="F:transcription corepressor activity"/>
    <property type="evidence" value="ECO:0000316"/>
    <property type="project" value="MGI"/>
</dbReference>
<dbReference type="GO" id="GO:0045746">
    <property type="term" value="P:negative regulation of Notch signaling pathway"/>
    <property type="evidence" value="ECO:0000314"/>
    <property type="project" value="MGI"/>
</dbReference>
<dbReference type="GO" id="GO:0007399">
    <property type="term" value="P:nervous system development"/>
    <property type="evidence" value="ECO:0007669"/>
    <property type="project" value="UniProtKB-KW"/>
</dbReference>
<dbReference type="GO" id="GO:0045666">
    <property type="term" value="P:positive regulation of neuron differentiation"/>
    <property type="evidence" value="ECO:0000315"/>
    <property type="project" value="MGI"/>
</dbReference>
<dbReference type="Gene3D" id="1.10.10.2590">
    <property type="entry name" value="BEN domain"/>
    <property type="match status" value="1"/>
</dbReference>
<dbReference type="InterPro" id="IPR018379">
    <property type="entry name" value="BEN_domain"/>
</dbReference>
<dbReference type="InterPro" id="IPR037496">
    <property type="entry name" value="BEND6-like"/>
</dbReference>
<dbReference type="PANTHER" id="PTHR35346">
    <property type="entry name" value="BEN DOMAIN-CONTAINING PROTEIN 6"/>
    <property type="match status" value="1"/>
</dbReference>
<dbReference type="PANTHER" id="PTHR35346:SF1">
    <property type="entry name" value="BEN DOMAIN-CONTAINING PROTEIN 6"/>
    <property type="match status" value="1"/>
</dbReference>
<dbReference type="Pfam" id="PF10523">
    <property type="entry name" value="BEN"/>
    <property type="match status" value="1"/>
</dbReference>
<dbReference type="SMART" id="SM01025">
    <property type="entry name" value="BEN"/>
    <property type="match status" value="1"/>
</dbReference>
<dbReference type="PROSITE" id="PS51457">
    <property type="entry name" value="BEN"/>
    <property type="match status" value="1"/>
</dbReference>
<name>BEND6_MOUSE</name>
<feature type="chain" id="PRO_0000295661" description="BEN domain-containing protein 6">
    <location>
        <begin position="1"/>
        <end position="281"/>
    </location>
</feature>
<feature type="domain" description="BEN" evidence="3">
    <location>
        <begin position="171"/>
        <end position="271"/>
    </location>
</feature>
<feature type="region of interest" description="Disordered" evidence="4">
    <location>
        <begin position="15"/>
        <end position="62"/>
    </location>
</feature>
<feature type="region of interest" description="Disordered" evidence="4">
    <location>
        <begin position="143"/>
        <end position="172"/>
    </location>
</feature>
<feature type="coiled-coil region" evidence="2">
    <location>
        <begin position="19"/>
        <end position="99"/>
    </location>
</feature>
<feature type="compositionally biased region" description="Low complexity" evidence="4">
    <location>
        <begin position="143"/>
        <end position="160"/>
    </location>
</feature>
<feature type="compositionally biased region" description="Basic and acidic residues" evidence="4">
    <location>
        <begin position="162"/>
        <end position="172"/>
    </location>
</feature>
<feature type="splice variant" id="VSP_026967" description="In isoform 3." evidence="7">
    <location>
        <begin position="1"/>
        <end position="62"/>
    </location>
</feature>
<feature type="splice variant" id="VSP_026968" description="In isoform 2." evidence="7">
    <original>VTKQVFPSADDVS</original>
    <variation>DRLITLYFPMNMK</variation>
    <location>
        <begin position="239"/>
        <end position="251"/>
    </location>
</feature>
<feature type="splice variant" id="VSP_026969" description="In isoform 2." evidence="7">
    <location>
        <begin position="252"/>
        <end position="281"/>
    </location>
</feature>
<keyword id="KW-0025">Alternative splicing</keyword>
<keyword id="KW-0175">Coiled coil</keyword>
<keyword id="KW-0524">Neurogenesis</keyword>
<keyword id="KW-0539">Nucleus</keyword>
<keyword id="KW-1185">Reference proteome</keyword>
<keyword id="KW-0678">Repressor</keyword>
<keyword id="KW-0804">Transcription</keyword>
<keyword id="KW-0805">Transcription regulation</keyword>
<proteinExistence type="evidence at protein level"/>